<dbReference type="EMBL" id="CP000407">
    <property type="protein sequence ID" value="ABP90298.1"/>
    <property type="molecule type" value="Genomic_DNA"/>
</dbReference>
<dbReference type="SMR" id="A4VW09"/>
<dbReference type="STRING" id="391295.SSU05_1332"/>
<dbReference type="KEGG" id="ssu:SSU05_1332"/>
<dbReference type="eggNOG" id="COG0080">
    <property type="taxonomic scope" value="Bacteria"/>
</dbReference>
<dbReference type="HOGENOM" id="CLU_074237_2_1_9"/>
<dbReference type="GO" id="GO:0022625">
    <property type="term" value="C:cytosolic large ribosomal subunit"/>
    <property type="evidence" value="ECO:0007669"/>
    <property type="project" value="TreeGrafter"/>
</dbReference>
<dbReference type="GO" id="GO:0070180">
    <property type="term" value="F:large ribosomal subunit rRNA binding"/>
    <property type="evidence" value="ECO:0007669"/>
    <property type="project" value="UniProtKB-UniRule"/>
</dbReference>
<dbReference type="GO" id="GO:0003735">
    <property type="term" value="F:structural constituent of ribosome"/>
    <property type="evidence" value="ECO:0007669"/>
    <property type="project" value="InterPro"/>
</dbReference>
<dbReference type="GO" id="GO:0006412">
    <property type="term" value="P:translation"/>
    <property type="evidence" value="ECO:0007669"/>
    <property type="project" value="UniProtKB-UniRule"/>
</dbReference>
<dbReference type="CDD" id="cd00349">
    <property type="entry name" value="Ribosomal_L11"/>
    <property type="match status" value="1"/>
</dbReference>
<dbReference type="FunFam" id="1.10.10.250:FF:000001">
    <property type="entry name" value="50S ribosomal protein L11"/>
    <property type="match status" value="1"/>
</dbReference>
<dbReference type="FunFam" id="3.30.1550.10:FF:000001">
    <property type="entry name" value="50S ribosomal protein L11"/>
    <property type="match status" value="1"/>
</dbReference>
<dbReference type="Gene3D" id="1.10.10.250">
    <property type="entry name" value="Ribosomal protein L11, C-terminal domain"/>
    <property type="match status" value="1"/>
</dbReference>
<dbReference type="Gene3D" id="3.30.1550.10">
    <property type="entry name" value="Ribosomal protein L11/L12, N-terminal domain"/>
    <property type="match status" value="1"/>
</dbReference>
<dbReference type="HAMAP" id="MF_00736">
    <property type="entry name" value="Ribosomal_uL11"/>
    <property type="match status" value="1"/>
</dbReference>
<dbReference type="InterPro" id="IPR000911">
    <property type="entry name" value="Ribosomal_uL11"/>
</dbReference>
<dbReference type="InterPro" id="IPR006519">
    <property type="entry name" value="Ribosomal_uL11_bac-typ"/>
</dbReference>
<dbReference type="InterPro" id="IPR020783">
    <property type="entry name" value="Ribosomal_uL11_C"/>
</dbReference>
<dbReference type="InterPro" id="IPR036769">
    <property type="entry name" value="Ribosomal_uL11_C_sf"/>
</dbReference>
<dbReference type="InterPro" id="IPR020784">
    <property type="entry name" value="Ribosomal_uL11_N"/>
</dbReference>
<dbReference type="InterPro" id="IPR036796">
    <property type="entry name" value="Ribosomal_uL11_N_sf"/>
</dbReference>
<dbReference type="NCBIfam" id="TIGR01632">
    <property type="entry name" value="L11_bact"/>
    <property type="match status" value="1"/>
</dbReference>
<dbReference type="PANTHER" id="PTHR11661">
    <property type="entry name" value="60S RIBOSOMAL PROTEIN L12"/>
    <property type="match status" value="1"/>
</dbReference>
<dbReference type="PANTHER" id="PTHR11661:SF1">
    <property type="entry name" value="LARGE RIBOSOMAL SUBUNIT PROTEIN UL11M"/>
    <property type="match status" value="1"/>
</dbReference>
<dbReference type="Pfam" id="PF00298">
    <property type="entry name" value="Ribosomal_L11"/>
    <property type="match status" value="1"/>
</dbReference>
<dbReference type="Pfam" id="PF03946">
    <property type="entry name" value="Ribosomal_L11_N"/>
    <property type="match status" value="1"/>
</dbReference>
<dbReference type="SMART" id="SM00649">
    <property type="entry name" value="RL11"/>
    <property type="match status" value="1"/>
</dbReference>
<dbReference type="SUPFAM" id="SSF54747">
    <property type="entry name" value="Ribosomal L11/L12e N-terminal domain"/>
    <property type="match status" value="1"/>
</dbReference>
<dbReference type="SUPFAM" id="SSF46906">
    <property type="entry name" value="Ribosomal protein L11, C-terminal domain"/>
    <property type="match status" value="1"/>
</dbReference>
<accession>A4VW09</accession>
<sequence length="141" mass="14743">MAKKVEKLVKLQIPAGKATPAPPVGPALGQAGINIMGFTKEFNARTADQAGMIIPVVISVYEDKSFTFITKTPPAAVLLKKAAGVEKGSGTPNKTKVATVTRAQVQKIAETKMPDLNAASLEAAMLMIEGTARSMGFTVTD</sequence>
<protein>
    <recommendedName>
        <fullName evidence="1">Large ribosomal subunit protein uL11</fullName>
    </recommendedName>
    <alternativeName>
        <fullName evidence="2">50S ribosomal protein L11</fullName>
    </alternativeName>
</protein>
<name>RL11_STRSY</name>
<gene>
    <name evidence="1" type="primary">rplK</name>
    <name type="ordered locus">SSU05_1332</name>
</gene>
<proteinExistence type="inferred from homology"/>
<comment type="function">
    <text evidence="1">Forms part of the ribosomal stalk which helps the ribosome interact with GTP-bound translation factors.</text>
</comment>
<comment type="subunit">
    <text evidence="1">Part of the ribosomal stalk of the 50S ribosomal subunit. Interacts with L10 and the large rRNA to form the base of the stalk. L10 forms an elongated spine to which L12 dimers bind in a sequential fashion forming a multimeric L10(L12)X complex.</text>
</comment>
<comment type="PTM">
    <text evidence="1">One or more lysine residues are methylated.</text>
</comment>
<comment type="similarity">
    <text evidence="1">Belongs to the universal ribosomal protein uL11 family.</text>
</comment>
<organism>
    <name type="scientific">Streptococcus suis (strain 05ZYH33)</name>
    <dbReference type="NCBI Taxonomy" id="391295"/>
    <lineage>
        <taxon>Bacteria</taxon>
        <taxon>Bacillati</taxon>
        <taxon>Bacillota</taxon>
        <taxon>Bacilli</taxon>
        <taxon>Lactobacillales</taxon>
        <taxon>Streptococcaceae</taxon>
        <taxon>Streptococcus</taxon>
    </lineage>
</organism>
<evidence type="ECO:0000255" key="1">
    <source>
        <dbReference type="HAMAP-Rule" id="MF_00736"/>
    </source>
</evidence>
<evidence type="ECO:0000305" key="2"/>
<feature type="chain" id="PRO_1000046278" description="Large ribosomal subunit protein uL11">
    <location>
        <begin position="1"/>
        <end position="141"/>
    </location>
</feature>
<reference key="1">
    <citation type="journal article" date="2007" name="PLoS ONE">
        <title>A glimpse of streptococcal toxic shock syndrome from comparative genomics of S. suis 2 Chinese isolates.</title>
        <authorList>
            <person name="Chen C."/>
            <person name="Tang J."/>
            <person name="Dong W."/>
            <person name="Wang C."/>
            <person name="Feng Y."/>
            <person name="Wang J."/>
            <person name="Zheng F."/>
            <person name="Pan X."/>
            <person name="Liu D."/>
            <person name="Li M."/>
            <person name="Song Y."/>
            <person name="Zhu X."/>
            <person name="Sun H."/>
            <person name="Feng T."/>
            <person name="Guo Z."/>
            <person name="Ju A."/>
            <person name="Ge J."/>
            <person name="Dong Y."/>
            <person name="Sun W."/>
            <person name="Jiang Y."/>
            <person name="Wang J."/>
            <person name="Yan J."/>
            <person name="Yang H."/>
            <person name="Wang X."/>
            <person name="Gao G.F."/>
            <person name="Yang R."/>
            <person name="Wang J."/>
            <person name="Yu J."/>
        </authorList>
    </citation>
    <scope>NUCLEOTIDE SEQUENCE [LARGE SCALE GENOMIC DNA]</scope>
    <source>
        <strain>05ZYH33</strain>
    </source>
</reference>
<keyword id="KW-0488">Methylation</keyword>
<keyword id="KW-0687">Ribonucleoprotein</keyword>
<keyword id="KW-0689">Ribosomal protein</keyword>
<keyword id="KW-0694">RNA-binding</keyword>
<keyword id="KW-0699">rRNA-binding</keyword>